<feature type="chain" id="PRO_0000230400" description="Small ribosomal subunit protein uS11">
    <location>
        <begin position="1"/>
        <end position="130"/>
    </location>
</feature>
<comment type="function">
    <text evidence="1">Located on the platform of the 30S subunit, it bridges several disparate RNA helices of the 16S rRNA. Forms part of the Shine-Dalgarno cleft in the 70S ribosome.</text>
</comment>
<comment type="subunit">
    <text evidence="1">Part of the 30S ribosomal subunit. Interacts with proteins S7 and S18. Binds to IF-3.</text>
</comment>
<comment type="similarity">
    <text evidence="1">Belongs to the universal ribosomal protein uS11 family.</text>
</comment>
<gene>
    <name evidence="1" type="primary">rpsK</name>
    <name type="ordered locus">DET0500</name>
</gene>
<reference key="1">
    <citation type="journal article" date="2005" name="Science">
        <title>Genome sequence of the PCE-dechlorinating bacterium Dehalococcoides ethenogenes.</title>
        <authorList>
            <person name="Seshadri R."/>
            <person name="Adrian L."/>
            <person name="Fouts D.E."/>
            <person name="Eisen J.A."/>
            <person name="Phillippy A.M."/>
            <person name="Methe B.A."/>
            <person name="Ward N.L."/>
            <person name="Nelson W.C."/>
            <person name="DeBoy R.T."/>
            <person name="Khouri H.M."/>
            <person name="Kolonay J.F."/>
            <person name="Dodson R.J."/>
            <person name="Daugherty S.C."/>
            <person name="Brinkac L.M."/>
            <person name="Sullivan S.A."/>
            <person name="Madupu R."/>
            <person name="Nelson K.E."/>
            <person name="Kang K.H."/>
            <person name="Impraim M."/>
            <person name="Tran K."/>
            <person name="Robinson J.M."/>
            <person name="Forberger H.A."/>
            <person name="Fraser C.M."/>
            <person name="Zinder S.H."/>
            <person name="Heidelberg J.F."/>
        </authorList>
    </citation>
    <scope>NUCLEOTIDE SEQUENCE [LARGE SCALE GENOMIC DNA]</scope>
    <source>
        <strain>ATCC BAA-2266 / KCTC 15142 / 195</strain>
    </source>
</reference>
<protein>
    <recommendedName>
        <fullName evidence="1">Small ribosomal subunit protein uS11</fullName>
    </recommendedName>
    <alternativeName>
        <fullName evidence="2">30S ribosomal protein S11</fullName>
    </alternativeName>
</protein>
<accession>Q3Z955</accession>
<proteinExistence type="inferred from homology"/>
<evidence type="ECO:0000255" key="1">
    <source>
        <dbReference type="HAMAP-Rule" id="MF_01310"/>
    </source>
</evidence>
<evidence type="ECO:0000305" key="2"/>
<dbReference type="EMBL" id="CP000027">
    <property type="protein sequence ID" value="AAW40258.1"/>
    <property type="molecule type" value="Genomic_DNA"/>
</dbReference>
<dbReference type="RefSeq" id="WP_010936277.1">
    <property type="nucleotide sequence ID" value="NC_002936.3"/>
</dbReference>
<dbReference type="SMR" id="Q3Z955"/>
<dbReference type="FunCoup" id="Q3Z955">
    <property type="interactions" value="346"/>
</dbReference>
<dbReference type="STRING" id="243164.DET0500"/>
<dbReference type="GeneID" id="3230222"/>
<dbReference type="KEGG" id="det:DET0500"/>
<dbReference type="eggNOG" id="COG0100">
    <property type="taxonomic scope" value="Bacteria"/>
</dbReference>
<dbReference type="HOGENOM" id="CLU_072439_5_0_0"/>
<dbReference type="InParanoid" id="Q3Z955"/>
<dbReference type="Proteomes" id="UP000008289">
    <property type="component" value="Chromosome"/>
</dbReference>
<dbReference type="GO" id="GO:1990904">
    <property type="term" value="C:ribonucleoprotein complex"/>
    <property type="evidence" value="ECO:0007669"/>
    <property type="project" value="UniProtKB-KW"/>
</dbReference>
<dbReference type="GO" id="GO:0005840">
    <property type="term" value="C:ribosome"/>
    <property type="evidence" value="ECO:0007669"/>
    <property type="project" value="UniProtKB-KW"/>
</dbReference>
<dbReference type="GO" id="GO:0019843">
    <property type="term" value="F:rRNA binding"/>
    <property type="evidence" value="ECO:0007669"/>
    <property type="project" value="UniProtKB-UniRule"/>
</dbReference>
<dbReference type="GO" id="GO:0003735">
    <property type="term" value="F:structural constituent of ribosome"/>
    <property type="evidence" value="ECO:0007669"/>
    <property type="project" value="InterPro"/>
</dbReference>
<dbReference type="GO" id="GO:0006412">
    <property type="term" value="P:translation"/>
    <property type="evidence" value="ECO:0007669"/>
    <property type="project" value="UniProtKB-UniRule"/>
</dbReference>
<dbReference type="FunFam" id="3.30.420.80:FF:000001">
    <property type="entry name" value="30S ribosomal protein S11"/>
    <property type="match status" value="1"/>
</dbReference>
<dbReference type="Gene3D" id="3.30.420.80">
    <property type="entry name" value="Ribosomal protein S11"/>
    <property type="match status" value="1"/>
</dbReference>
<dbReference type="HAMAP" id="MF_01310">
    <property type="entry name" value="Ribosomal_uS11"/>
    <property type="match status" value="1"/>
</dbReference>
<dbReference type="InterPro" id="IPR001971">
    <property type="entry name" value="Ribosomal_uS11"/>
</dbReference>
<dbReference type="InterPro" id="IPR019981">
    <property type="entry name" value="Ribosomal_uS11_bac-type"/>
</dbReference>
<dbReference type="InterPro" id="IPR018102">
    <property type="entry name" value="Ribosomal_uS11_CS"/>
</dbReference>
<dbReference type="InterPro" id="IPR036967">
    <property type="entry name" value="Ribosomal_uS11_sf"/>
</dbReference>
<dbReference type="NCBIfam" id="NF003698">
    <property type="entry name" value="PRK05309.1"/>
    <property type="match status" value="1"/>
</dbReference>
<dbReference type="NCBIfam" id="TIGR03632">
    <property type="entry name" value="uS11_bact"/>
    <property type="match status" value="1"/>
</dbReference>
<dbReference type="PANTHER" id="PTHR11759">
    <property type="entry name" value="40S RIBOSOMAL PROTEIN S14/30S RIBOSOMAL PROTEIN S11"/>
    <property type="match status" value="1"/>
</dbReference>
<dbReference type="Pfam" id="PF00411">
    <property type="entry name" value="Ribosomal_S11"/>
    <property type="match status" value="1"/>
</dbReference>
<dbReference type="PIRSF" id="PIRSF002131">
    <property type="entry name" value="Ribosomal_S11"/>
    <property type="match status" value="1"/>
</dbReference>
<dbReference type="SUPFAM" id="SSF53137">
    <property type="entry name" value="Translational machinery components"/>
    <property type="match status" value="1"/>
</dbReference>
<dbReference type="PROSITE" id="PS00054">
    <property type="entry name" value="RIBOSOMAL_S11"/>
    <property type="match status" value="1"/>
</dbReference>
<name>RS11_DEHM1</name>
<organism>
    <name type="scientific">Dehalococcoides mccartyi (strain ATCC BAA-2266 / KCTC 15142 / 195)</name>
    <name type="common">Dehalococcoides ethenogenes (strain 195)</name>
    <dbReference type="NCBI Taxonomy" id="243164"/>
    <lineage>
        <taxon>Bacteria</taxon>
        <taxon>Bacillati</taxon>
        <taxon>Chloroflexota</taxon>
        <taxon>Dehalococcoidia</taxon>
        <taxon>Dehalococcoidales</taxon>
        <taxon>Dehalococcoidaceae</taxon>
        <taxon>Dehalococcoides</taxon>
    </lineage>
</organism>
<keyword id="KW-0687">Ribonucleoprotein</keyword>
<keyword id="KW-0689">Ribosomal protein</keyword>
<keyword id="KW-0694">RNA-binding</keyword>
<keyword id="KW-0699">rRNA-binding</keyword>
<sequence>MAVKKRAGAKKKEKKVIPVGKAFVQATFNNTIVTLTDLQGNVIAWASCGTAGFKGSRKGTPYAAQMAAQAAARKAAESGLRQVEVLVKGPGSGREAAIRSLQASGINVTAIRDVTPIPHNGCRPPKRRRV</sequence>